<reference key="1">
    <citation type="submission" date="2007-11" db="EMBL/GenBank/DDBJ databases">
        <authorList>
            <consortium name="The Salmonella enterica serovar Paratyphi B Genome Sequencing Project"/>
            <person name="McClelland M."/>
            <person name="Sanderson E.K."/>
            <person name="Porwollik S."/>
            <person name="Spieth J."/>
            <person name="Clifton W.S."/>
            <person name="Fulton R."/>
            <person name="Cordes M."/>
            <person name="Wollam A."/>
            <person name="Shah N."/>
            <person name="Pepin K."/>
            <person name="Bhonagiri V."/>
            <person name="Nash W."/>
            <person name="Johnson M."/>
            <person name="Thiruvilangam P."/>
            <person name="Wilson R."/>
        </authorList>
    </citation>
    <scope>NUCLEOTIDE SEQUENCE [LARGE SCALE GENOMIC DNA]</scope>
    <source>
        <strain>ATCC BAA-1250 / SPB7</strain>
    </source>
</reference>
<dbReference type="EC" id="1.1.5.3" evidence="1"/>
<dbReference type="EMBL" id="CP000886">
    <property type="protein sequence ID" value="ABX66125.1"/>
    <property type="molecule type" value="Genomic_DNA"/>
</dbReference>
<dbReference type="RefSeq" id="WP_000667150.1">
    <property type="nucleotide sequence ID" value="NC_010102.1"/>
</dbReference>
<dbReference type="KEGG" id="spq:SPAB_00699"/>
<dbReference type="PATRIC" id="fig|1016998.12.peg.658"/>
<dbReference type="HOGENOM" id="CLU_047793_0_0_6"/>
<dbReference type="BioCyc" id="SENT1016998:SPAB_RS02910-MONOMER"/>
<dbReference type="UniPathway" id="UPA00618">
    <property type="reaction ID" value="UER00673"/>
</dbReference>
<dbReference type="Proteomes" id="UP000008556">
    <property type="component" value="Chromosome"/>
</dbReference>
<dbReference type="GO" id="GO:0009331">
    <property type="term" value="C:glycerol-3-phosphate dehydrogenase (FAD) complex"/>
    <property type="evidence" value="ECO:0007669"/>
    <property type="project" value="InterPro"/>
</dbReference>
<dbReference type="GO" id="GO:0004368">
    <property type="term" value="F:glycerol-3-phosphate dehydrogenase (quinone) activity"/>
    <property type="evidence" value="ECO:0007669"/>
    <property type="project" value="UniProtKB-UniRule"/>
</dbReference>
<dbReference type="GO" id="GO:0019563">
    <property type="term" value="P:glycerol catabolic process"/>
    <property type="evidence" value="ECO:0007669"/>
    <property type="project" value="UniProtKB-UniRule"/>
</dbReference>
<dbReference type="Gene3D" id="3.50.50.60">
    <property type="entry name" value="FAD/NAD(P)-binding domain"/>
    <property type="match status" value="1"/>
</dbReference>
<dbReference type="HAMAP" id="MF_00753">
    <property type="entry name" value="Glycerol3P_GlpB"/>
    <property type="match status" value="1"/>
</dbReference>
<dbReference type="InterPro" id="IPR003953">
    <property type="entry name" value="FAD-dep_OxRdtase_2_FAD-bd"/>
</dbReference>
<dbReference type="InterPro" id="IPR036188">
    <property type="entry name" value="FAD/NAD-bd_sf"/>
</dbReference>
<dbReference type="InterPro" id="IPR009158">
    <property type="entry name" value="G3P_DH_GlpB_su"/>
</dbReference>
<dbReference type="NCBIfam" id="TIGR03378">
    <property type="entry name" value="glycerol3P_GlpB"/>
    <property type="match status" value="1"/>
</dbReference>
<dbReference type="NCBIfam" id="NF003718">
    <property type="entry name" value="PRK05329.1-1"/>
    <property type="match status" value="1"/>
</dbReference>
<dbReference type="NCBIfam" id="NF003719">
    <property type="entry name" value="PRK05329.1-2"/>
    <property type="match status" value="1"/>
</dbReference>
<dbReference type="NCBIfam" id="NF003720">
    <property type="entry name" value="PRK05329.1-3"/>
    <property type="match status" value="1"/>
</dbReference>
<dbReference type="NCBIfam" id="NF003721">
    <property type="entry name" value="PRK05329.1-4"/>
    <property type="match status" value="1"/>
</dbReference>
<dbReference type="Pfam" id="PF00890">
    <property type="entry name" value="FAD_binding_2"/>
    <property type="match status" value="1"/>
</dbReference>
<dbReference type="PIRSF" id="PIRSF000141">
    <property type="entry name" value="Anaerobic_G3P_dh"/>
    <property type="match status" value="1"/>
</dbReference>
<dbReference type="SUPFAM" id="SSF51905">
    <property type="entry name" value="FAD/NAD(P)-binding domain"/>
    <property type="match status" value="1"/>
</dbReference>
<feature type="chain" id="PRO_1000083503" description="Anaerobic glycerol-3-phosphate dehydrogenase subunit B">
    <location>
        <begin position="1"/>
        <end position="419"/>
    </location>
</feature>
<name>GLPB_SALPB</name>
<gene>
    <name evidence="1" type="primary">glpB</name>
    <name type="ordered locus">SPAB_00699</name>
</gene>
<accession>A9N5C9</accession>
<organism>
    <name type="scientific">Salmonella paratyphi B (strain ATCC BAA-1250 / SPB7)</name>
    <dbReference type="NCBI Taxonomy" id="1016998"/>
    <lineage>
        <taxon>Bacteria</taxon>
        <taxon>Pseudomonadati</taxon>
        <taxon>Pseudomonadota</taxon>
        <taxon>Gammaproteobacteria</taxon>
        <taxon>Enterobacterales</taxon>
        <taxon>Enterobacteriaceae</taxon>
        <taxon>Salmonella</taxon>
    </lineage>
</organism>
<evidence type="ECO:0000255" key="1">
    <source>
        <dbReference type="HAMAP-Rule" id="MF_00753"/>
    </source>
</evidence>
<keyword id="KW-0285">Flavoprotein</keyword>
<keyword id="KW-0288">FMN</keyword>
<keyword id="KW-0560">Oxidoreductase</keyword>
<sequence length="419" mass="45705">MKFDTVIMGGGLAGLLCGLQLQQHGLRCAIVTRGQSALHFSSGSLDLLSALPDGQPVTDITAGLDALRRQAPEHPYSRLGAQKVLTLAQQAQTLLNASGAQLYGDVQQAHQRVTPLGTLRSTWLSSPEVPVWPLSAQRICVVGVSGLLDFQAHLAAASLRQRDLNVETAEIDLPELDVLRDNPTEFRAVNIARLLDNEEKWPLLYDALSPIATNCDMIIMPACFGLANDTLWRWLNERLPCALTLLPTLPPSVLGIRLHNQLQRQFVRQGGIWMPGDEVKKVTCRHGTVSEIWTRNHADIPLRPRFAVLASGSFFSSGLVAEREGIREPILGLDVQQTATRAEWYQQHFFDPQPWQQFGVVTDDAFRPSLAGNTVENLYAIGSVLAGFDPIAEGCGGGVCAVSALQAAHHIAERAGEQQ</sequence>
<proteinExistence type="inferred from homology"/>
<protein>
    <recommendedName>
        <fullName evidence="1">Anaerobic glycerol-3-phosphate dehydrogenase subunit B</fullName>
        <shortName evidence="1">Anaerobic G-3-P dehydrogenase subunit B</shortName>
        <shortName evidence="1">Anaerobic G3Pdhase B</shortName>
        <ecNumber evidence="1">1.1.5.3</ecNumber>
    </recommendedName>
</protein>
<comment type="function">
    <text evidence="1">Conversion of glycerol 3-phosphate to dihydroxyacetone. Uses fumarate or nitrate as electron acceptor.</text>
</comment>
<comment type="catalytic activity">
    <reaction evidence="1">
        <text>a quinone + sn-glycerol 3-phosphate = dihydroxyacetone phosphate + a quinol</text>
        <dbReference type="Rhea" id="RHEA:18977"/>
        <dbReference type="ChEBI" id="CHEBI:24646"/>
        <dbReference type="ChEBI" id="CHEBI:57597"/>
        <dbReference type="ChEBI" id="CHEBI:57642"/>
        <dbReference type="ChEBI" id="CHEBI:132124"/>
        <dbReference type="EC" id="1.1.5.3"/>
    </reaction>
</comment>
<comment type="cofactor">
    <cofactor evidence="1">
        <name>FMN</name>
        <dbReference type="ChEBI" id="CHEBI:58210"/>
    </cofactor>
</comment>
<comment type="pathway">
    <text evidence="1">Polyol metabolism; glycerol degradation via glycerol kinase pathway; glycerone phosphate from sn-glycerol 3-phosphate (anaerobic route): step 1/1.</text>
</comment>
<comment type="subunit">
    <text evidence="1">Composed of a catalytic GlpA/B dimer and of membrane bound GlpC.</text>
</comment>
<comment type="similarity">
    <text evidence="1">Belongs to the anaerobic G-3-P dehydrogenase subunit B family.</text>
</comment>